<organism>
    <name type="scientific">Xenopus laevis</name>
    <name type="common">African clawed frog</name>
    <dbReference type="NCBI Taxonomy" id="8355"/>
    <lineage>
        <taxon>Eukaryota</taxon>
        <taxon>Metazoa</taxon>
        <taxon>Chordata</taxon>
        <taxon>Craniata</taxon>
        <taxon>Vertebrata</taxon>
        <taxon>Euteleostomi</taxon>
        <taxon>Amphibia</taxon>
        <taxon>Batrachia</taxon>
        <taxon>Anura</taxon>
        <taxon>Pipoidea</taxon>
        <taxon>Pipidae</taxon>
        <taxon>Xenopodinae</taxon>
        <taxon>Xenopus</taxon>
        <taxon>Xenopus</taxon>
    </lineage>
</organism>
<accession>Q6GP70</accession>
<protein>
    <recommendedName>
        <fullName>Adenosine deaminase</fullName>
        <ecNumber evidence="2">3.5.4.4</ecNumber>
    </recommendedName>
    <alternativeName>
        <fullName>Adenosine aminohydrolase</fullName>
    </alternativeName>
</protein>
<name>ADA_XENLA</name>
<feature type="chain" id="PRO_0000194357" description="Adenosine deaminase">
    <location>
        <begin position="1"/>
        <end position="358"/>
    </location>
</feature>
<feature type="active site" description="Proton donor" evidence="3">
    <location>
        <position position="215"/>
    </location>
</feature>
<feature type="binding site" evidence="4">
    <location>
        <position position="14"/>
    </location>
    <ligand>
        <name>Zn(2+)</name>
        <dbReference type="ChEBI" id="CHEBI:29105"/>
        <note>catalytic</note>
    </ligand>
</feature>
<feature type="binding site" evidence="4">
    <location>
        <position position="16"/>
    </location>
    <ligand>
        <name>substrate</name>
    </ligand>
</feature>
<feature type="binding site" evidence="4">
    <location>
        <position position="16"/>
    </location>
    <ligand>
        <name>Zn(2+)</name>
        <dbReference type="ChEBI" id="CHEBI:29105"/>
        <note>catalytic</note>
    </ligand>
</feature>
<feature type="binding site" evidence="4">
    <location>
        <position position="18"/>
    </location>
    <ligand>
        <name>substrate</name>
    </ligand>
</feature>
<feature type="binding site" evidence="4">
    <location>
        <position position="183"/>
    </location>
    <ligand>
        <name>substrate</name>
    </ligand>
</feature>
<feature type="binding site" evidence="4">
    <location>
        <position position="212"/>
    </location>
    <ligand>
        <name>Zn(2+)</name>
        <dbReference type="ChEBI" id="CHEBI:29105"/>
        <note>catalytic</note>
    </ligand>
</feature>
<feature type="binding site" evidence="4">
    <location>
        <position position="294"/>
    </location>
    <ligand>
        <name>Zn(2+)</name>
        <dbReference type="ChEBI" id="CHEBI:29105"/>
        <note>catalytic</note>
    </ligand>
</feature>
<feature type="binding site" evidence="4">
    <location>
        <position position="295"/>
    </location>
    <ligand>
        <name>substrate</name>
    </ligand>
</feature>
<feature type="site" description="Important for catalytic activity" evidence="3">
    <location>
        <position position="236"/>
    </location>
</feature>
<proteinExistence type="evidence at transcript level"/>
<evidence type="ECO:0000250" key="1"/>
<evidence type="ECO:0000250" key="2">
    <source>
        <dbReference type="UniProtKB" id="P00813"/>
    </source>
</evidence>
<evidence type="ECO:0000250" key="3">
    <source>
        <dbReference type="UniProtKB" id="P03958"/>
    </source>
</evidence>
<evidence type="ECO:0000250" key="4">
    <source>
        <dbReference type="UniProtKB" id="P56658"/>
    </source>
</evidence>
<evidence type="ECO:0000305" key="5"/>
<gene>
    <name type="primary">ada</name>
</gene>
<dbReference type="EC" id="3.5.4.4" evidence="2"/>
<dbReference type="EMBL" id="BC073271">
    <property type="protein sequence ID" value="AAH73271.1"/>
    <property type="molecule type" value="mRNA"/>
</dbReference>
<dbReference type="RefSeq" id="NP_001085740.1">
    <property type="nucleotide sequence ID" value="NM_001092271.1"/>
</dbReference>
<dbReference type="SMR" id="Q6GP70"/>
<dbReference type="DNASU" id="444167"/>
<dbReference type="GeneID" id="444167"/>
<dbReference type="KEGG" id="xla:444167"/>
<dbReference type="AGR" id="Xenbase:XB-GENE-950506"/>
<dbReference type="CTD" id="444167"/>
<dbReference type="Xenbase" id="XB-GENE-950506">
    <property type="gene designation" value="ada.S"/>
</dbReference>
<dbReference type="OrthoDB" id="272271at2759"/>
<dbReference type="Proteomes" id="UP000186698">
    <property type="component" value="Chromosome 9_10S"/>
</dbReference>
<dbReference type="Bgee" id="444167">
    <property type="expression patterns" value="Expressed in muscle tissue and 16 other cell types or tissues"/>
</dbReference>
<dbReference type="GO" id="GO:0070161">
    <property type="term" value="C:anchoring junction"/>
    <property type="evidence" value="ECO:0007669"/>
    <property type="project" value="UniProtKB-SubCell"/>
</dbReference>
<dbReference type="GO" id="GO:0060205">
    <property type="term" value="C:cytoplasmic vesicle lumen"/>
    <property type="evidence" value="ECO:0007669"/>
    <property type="project" value="UniProtKB-SubCell"/>
</dbReference>
<dbReference type="GO" id="GO:0005829">
    <property type="term" value="C:cytosol"/>
    <property type="evidence" value="ECO:0000318"/>
    <property type="project" value="GO_Central"/>
</dbReference>
<dbReference type="GO" id="GO:0009897">
    <property type="term" value="C:external side of plasma membrane"/>
    <property type="evidence" value="ECO:0000318"/>
    <property type="project" value="GO_Central"/>
</dbReference>
<dbReference type="GO" id="GO:0005764">
    <property type="term" value="C:lysosome"/>
    <property type="evidence" value="ECO:0007669"/>
    <property type="project" value="UniProtKB-SubCell"/>
</dbReference>
<dbReference type="GO" id="GO:0046936">
    <property type="term" value="F:2'-deoxyadenosine deaminase activity"/>
    <property type="evidence" value="ECO:0007669"/>
    <property type="project" value="RHEA"/>
</dbReference>
<dbReference type="GO" id="GO:0004000">
    <property type="term" value="F:adenosine deaminase activity"/>
    <property type="evidence" value="ECO:0000250"/>
    <property type="project" value="UniProtKB"/>
</dbReference>
<dbReference type="GO" id="GO:0008270">
    <property type="term" value="F:zinc ion binding"/>
    <property type="evidence" value="ECO:0000250"/>
    <property type="project" value="UniProtKB"/>
</dbReference>
<dbReference type="GO" id="GO:0006154">
    <property type="term" value="P:adenosine catabolic process"/>
    <property type="evidence" value="ECO:0000250"/>
    <property type="project" value="UniProtKB"/>
</dbReference>
<dbReference type="GO" id="GO:0043103">
    <property type="term" value="P:hypoxanthine salvage"/>
    <property type="evidence" value="ECO:0000318"/>
    <property type="project" value="GO_Central"/>
</dbReference>
<dbReference type="GO" id="GO:0046103">
    <property type="term" value="P:inosine biosynthetic process"/>
    <property type="evidence" value="ECO:0000250"/>
    <property type="project" value="UniProtKB"/>
</dbReference>
<dbReference type="GO" id="GO:0060169">
    <property type="term" value="P:negative regulation of adenosine receptor signaling pathway"/>
    <property type="evidence" value="ECO:0000318"/>
    <property type="project" value="GO_Central"/>
</dbReference>
<dbReference type="GO" id="GO:0009117">
    <property type="term" value="P:nucleotide metabolic process"/>
    <property type="evidence" value="ECO:0007669"/>
    <property type="project" value="UniProtKB-KW"/>
</dbReference>
<dbReference type="GO" id="GO:0009168">
    <property type="term" value="P:purine ribonucleoside monophosphate biosynthetic process"/>
    <property type="evidence" value="ECO:0007669"/>
    <property type="project" value="InterPro"/>
</dbReference>
<dbReference type="GO" id="GO:0042110">
    <property type="term" value="P:T cell activation"/>
    <property type="evidence" value="ECO:0000318"/>
    <property type="project" value="GO_Central"/>
</dbReference>
<dbReference type="CDD" id="cd01320">
    <property type="entry name" value="ADA"/>
    <property type="match status" value="1"/>
</dbReference>
<dbReference type="FunFam" id="3.20.20.140:FF:000038">
    <property type="entry name" value="Adenosine deaminase"/>
    <property type="match status" value="1"/>
</dbReference>
<dbReference type="Gene3D" id="3.20.20.140">
    <property type="entry name" value="Metal-dependent hydrolases"/>
    <property type="match status" value="1"/>
</dbReference>
<dbReference type="HAMAP" id="MF_00540">
    <property type="entry name" value="A_deaminase"/>
    <property type="match status" value="1"/>
</dbReference>
<dbReference type="InterPro" id="IPR006650">
    <property type="entry name" value="A/AMP_deam_AS"/>
</dbReference>
<dbReference type="InterPro" id="IPR028893">
    <property type="entry name" value="A_deaminase"/>
</dbReference>
<dbReference type="InterPro" id="IPR001365">
    <property type="entry name" value="A_deaminase_dom"/>
</dbReference>
<dbReference type="InterPro" id="IPR006330">
    <property type="entry name" value="Ado/ade_deaminase"/>
</dbReference>
<dbReference type="InterPro" id="IPR032466">
    <property type="entry name" value="Metal_Hydrolase"/>
</dbReference>
<dbReference type="NCBIfam" id="TIGR01430">
    <property type="entry name" value="aden_deam"/>
    <property type="match status" value="1"/>
</dbReference>
<dbReference type="PANTHER" id="PTHR11409">
    <property type="entry name" value="ADENOSINE DEAMINASE"/>
    <property type="match status" value="1"/>
</dbReference>
<dbReference type="PANTHER" id="PTHR11409:SF49">
    <property type="entry name" value="ADENOSINE DEAMINASE"/>
    <property type="match status" value="1"/>
</dbReference>
<dbReference type="Pfam" id="PF00962">
    <property type="entry name" value="A_deaminase"/>
    <property type="match status" value="1"/>
</dbReference>
<dbReference type="SUPFAM" id="SSF51556">
    <property type="entry name" value="Metallo-dependent hydrolases"/>
    <property type="match status" value="1"/>
</dbReference>
<dbReference type="PROSITE" id="PS00485">
    <property type="entry name" value="A_DEAMINASE"/>
    <property type="match status" value="1"/>
</dbReference>
<keyword id="KW-0965">Cell junction</keyword>
<keyword id="KW-1003">Cell membrane</keyword>
<keyword id="KW-0963">Cytoplasm</keyword>
<keyword id="KW-0968">Cytoplasmic vesicle</keyword>
<keyword id="KW-0378">Hydrolase</keyword>
<keyword id="KW-0458">Lysosome</keyword>
<keyword id="KW-0472">Membrane</keyword>
<keyword id="KW-0479">Metal-binding</keyword>
<keyword id="KW-0546">Nucleotide metabolism</keyword>
<keyword id="KW-1185">Reference proteome</keyword>
<keyword id="KW-0862">Zinc</keyword>
<sequence length="358" mass="40676">MESKAFNKPKVELHVHLDGSIKPETIIHFAKKRQIKLPADTVEGLLEHVSYKEPLSLTEFLQKFNHYMPAIAGDREAIKRIAYEFVEMKAKEGVIYVEVRYSPHFLANSKVDPIPWGQKEGDITPDEVVDLVNQGLRKGEKTFNIKARSILCCMRHMPNWSSEVIELCKKYQNDTVVAIDLAGDESLNCESYPGHRKAYEEAVKCGIHRTVHAGEVGPPSVVKEAVEVLKAERIGHGYHTTEDPNLYKELLENNMHFEVCPWSSYLTSACHPDFTKHPATQFRKDKANFSLNTDDPLIFGSTLDVDYSIAVQHMGFTEDEFKRVNINAAKSSFLPDNEKKELLYKLYEAYGMILSTGL</sequence>
<reference key="1">
    <citation type="submission" date="2004-06" db="EMBL/GenBank/DDBJ databases">
        <authorList>
            <consortium name="NIH - Xenopus Gene Collection (XGC) project"/>
        </authorList>
    </citation>
    <scope>NUCLEOTIDE SEQUENCE [LARGE SCALE MRNA]</scope>
    <source>
        <tissue>Spleen</tissue>
    </source>
</reference>
<comment type="function">
    <text evidence="1">Catalyzes the hydrolytic deamination of adenosine and 2-deoxyadenosine. Plays an important role in purine metabolism and in adenosine homeostasis. Modulates signaling by extracellular adenosine, and so contributes indirectly to cellular signaling events. May act as a positive regulator of T-cell coactivation (By similarity).</text>
</comment>
<comment type="catalytic activity">
    <reaction evidence="2">
        <text>adenosine + H2O + H(+) = inosine + NH4(+)</text>
        <dbReference type="Rhea" id="RHEA:24408"/>
        <dbReference type="ChEBI" id="CHEBI:15377"/>
        <dbReference type="ChEBI" id="CHEBI:15378"/>
        <dbReference type="ChEBI" id="CHEBI:16335"/>
        <dbReference type="ChEBI" id="CHEBI:17596"/>
        <dbReference type="ChEBI" id="CHEBI:28938"/>
        <dbReference type="EC" id="3.5.4.4"/>
    </reaction>
    <physiologicalReaction direction="left-to-right" evidence="2">
        <dbReference type="Rhea" id="RHEA:24409"/>
    </physiologicalReaction>
</comment>
<comment type="catalytic activity">
    <reaction evidence="2">
        <text>2'-deoxyadenosine + H2O + H(+) = 2'-deoxyinosine + NH4(+)</text>
        <dbReference type="Rhea" id="RHEA:28190"/>
        <dbReference type="ChEBI" id="CHEBI:15377"/>
        <dbReference type="ChEBI" id="CHEBI:15378"/>
        <dbReference type="ChEBI" id="CHEBI:17256"/>
        <dbReference type="ChEBI" id="CHEBI:28938"/>
        <dbReference type="ChEBI" id="CHEBI:28997"/>
        <dbReference type="EC" id="3.5.4.4"/>
    </reaction>
    <physiologicalReaction direction="left-to-right" evidence="2">
        <dbReference type="Rhea" id="RHEA:28191"/>
    </physiologicalReaction>
</comment>
<comment type="cofactor">
    <cofactor evidence="3">
        <name>Zn(2+)</name>
        <dbReference type="ChEBI" id="CHEBI:29105"/>
    </cofactor>
    <text evidence="3">Binds 1 zinc ion per subunit.</text>
</comment>
<comment type="subcellular location">
    <subcellularLocation>
        <location evidence="2">Cell membrane</location>
        <topology evidence="1">Peripheral membrane protein</topology>
        <orientation evidence="1">Extracellular side</orientation>
    </subcellularLocation>
    <subcellularLocation>
        <location evidence="2">Cell junction</location>
    </subcellularLocation>
    <subcellularLocation>
        <location evidence="3">Cytoplasmic vesicle lumen</location>
    </subcellularLocation>
    <subcellularLocation>
        <location evidence="1">Cytoplasm</location>
    </subcellularLocation>
    <subcellularLocation>
        <location evidence="2">Lysosome</location>
    </subcellularLocation>
</comment>
<comment type="similarity">
    <text evidence="5">Belongs to the metallo-dependent hydrolases superfamily. Adenosine and AMP deaminases family.</text>
</comment>